<comment type="function">
    <text>Guanine nucleotide-binding proteins (G proteins) are involved as a modulator or transducer in various transmembrane signaling systems. The beta and gamma chains are required for the GTPase activity, for replacement of GDP by GTP, and for G protein-effector interaction.</text>
</comment>
<comment type="subunit">
    <text>G proteins are composed of 3 units, alpha, beta and gamma.</text>
</comment>
<comment type="interaction">
    <interactant intactId="EBI-11427343">
        <id>Q9P2W3</id>
    </interactant>
    <interactant intactId="EBI-742038">
        <id>Q9P2A4</id>
        <label>ABI3</label>
    </interactant>
    <organismsDiffer>false</organismsDiffer>
    <experiments>3</experiments>
</comment>
<comment type="interaction">
    <interactant intactId="EBI-11427343">
        <id>Q9P2W3</id>
    </interactant>
    <interactant intactId="EBI-10173507">
        <id>Q6UY14-3</id>
        <label>ADAMTSL4</label>
    </interactant>
    <organismsDiffer>false</organismsDiffer>
    <experiments>3</experiments>
</comment>
<comment type="interaction">
    <interactant intactId="EBI-11427343">
        <id>Q9P2W3</id>
    </interactant>
    <interactant intactId="EBI-10243741">
        <id>Q5H9J7</id>
        <label>BEX5</label>
    </interactant>
    <organismsDiffer>false</organismsDiffer>
    <experiments>3</experiments>
</comment>
<comment type="interaction">
    <interactant intactId="EBI-11427343">
        <id>Q9P2W3</id>
    </interactant>
    <interactant intactId="EBI-10175300">
        <id>Q8TD31-3</id>
        <label>CCHCR1</label>
    </interactant>
    <organismsDiffer>false</organismsDiffer>
    <experiments>3</experiments>
</comment>
<comment type="interaction">
    <interactant intactId="EBI-11427343">
        <id>Q9P2W3</id>
    </interactant>
    <interactant intactId="EBI-1188472">
        <id>P78358</id>
        <label>CTAG1B</label>
    </interactant>
    <organismsDiffer>false</organismsDiffer>
    <experiments>3</experiments>
</comment>
<comment type="interaction">
    <interactant intactId="EBI-11427343">
        <id>Q9P2W3</id>
    </interactant>
    <interactant intactId="EBI-3867333">
        <id>A8MQ03</id>
        <label>CYSRT1</label>
    </interactant>
    <organismsDiffer>false</organismsDiffer>
    <experiments>3</experiments>
</comment>
<comment type="interaction">
    <interactant intactId="EBI-11427343">
        <id>Q9P2W3</id>
    </interactant>
    <interactant intactId="EBI-11988027">
        <id>Q9NRI5-2</id>
        <label>DISC1</label>
    </interactant>
    <organismsDiffer>false</organismsDiffer>
    <experiments>3</experiments>
</comment>
<comment type="interaction">
    <interactant intactId="EBI-11427343">
        <id>Q9P2W3</id>
    </interactant>
    <interactant intactId="EBI-11748557">
        <id>Q9Y6C2-2</id>
        <label>EMILIN1</label>
    </interactant>
    <organismsDiffer>false</organismsDiffer>
    <experiments>3</experiments>
</comment>
<comment type="interaction">
    <interactant intactId="EBI-11427343">
        <id>Q9P2W3</id>
    </interactant>
    <interactant intactId="EBI-18138793">
        <id>Q9C0B1-2</id>
        <label>FTO</label>
    </interactant>
    <organismsDiffer>false</organismsDiffer>
    <experiments>3</experiments>
</comment>
<comment type="interaction">
    <interactant intactId="EBI-11427343">
        <id>Q9P2W3</id>
    </interactant>
    <interactant intactId="EBI-374781">
        <id>O76003</id>
        <label>GLRX3</label>
    </interactant>
    <organismsDiffer>false</organismsDiffer>
    <experiments>3</experiments>
</comment>
<comment type="interaction">
    <interactant intactId="EBI-11427343">
        <id>Q9P2W3</id>
    </interactant>
    <interactant intactId="EBI-2558217">
        <id>Q68CZ6</id>
        <label>HAUS3</label>
    </interactant>
    <organismsDiffer>false</organismsDiffer>
    <experiments>3</experiments>
</comment>
<comment type="interaction">
    <interactant intactId="EBI-11427343">
        <id>Q9P2W3</id>
    </interactant>
    <interactant intactId="EBI-12896693">
        <id>P31260-2</id>
        <label>HOXA10</label>
    </interactant>
    <organismsDiffer>false</organismsDiffer>
    <experiments>3</experiments>
</comment>
<comment type="interaction">
    <interactant intactId="EBI-11427343">
        <id>Q9P2W3</id>
    </interactant>
    <interactant intactId="EBI-3044087">
        <id>Q7Z3Y8</id>
        <label>KRT27</label>
    </interactant>
    <organismsDiffer>false</organismsDiffer>
    <experiments>3</experiments>
</comment>
<comment type="interaction">
    <interactant intactId="EBI-11427343">
        <id>Q9P2W3</id>
    </interactant>
    <interactant intactId="EBI-1047093">
        <id>O76011</id>
        <label>KRT34</label>
    </interactant>
    <organismsDiffer>false</organismsDiffer>
    <experiments>3</experiments>
</comment>
<comment type="interaction">
    <interactant intactId="EBI-11427343">
        <id>Q9P2W3</id>
    </interactant>
    <interactant intactId="EBI-1045716">
        <id>O76014</id>
        <label>KRT37</label>
    </interactant>
    <organismsDiffer>false</organismsDiffer>
    <experiments>3</experiments>
</comment>
<comment type="interaction">
    <interactant intactId="EBI-11427343">
        <id>Q9P2W3</id>
    </interactant>
    <interactant intactId="EBI-1047263">
        <id>O76015</id>
        <label>KRT38</label>
    </interactant>
    <organismsDiffer>false</organismsDiffer>
    <experiments>3</experiments>
</comment>
<comment type="interaction">
    <interactant intactId="EBI-11427343">
        <id>Q9P2W3</id>
    </interactant>
    <interactant intactId="EBI-1044640">
        <id>Q9BYQ4</id>
        <label>KRTAP9-2</label>
    </interactant>
    <organismsDiffer>false</organismsDiffer>
    <experiments>3</experiments>
</comment>
<comment type="interaction">
    <interactant intactId="EBI-11427343">
        <id>Q9P2W3</id>
    </interactant>
    <interactant intactId="EBI-16439278">
        <id>Q6FHY5</id>
        <label>MEOX2</label>
    </interactant>
    <organismsDiffer>false</organismsDiffer>
    <experiments>3</experiments>
</comment>
<comment type="interaction">
    <interactant intactId="EBI-11427343">
        <id>Q9P2W3</id>
    </interactant>
    <interactant intactId="EBI-296331">
        <id>Q02548</id>
        <label>PAX5</label>
    </interactant>
    <organismsDiffer>false</organismsDiffer>
    <experiments>3</experiments>
</comment>
<comment type="interaction">
    <interactant intactId="EBI-11427343">
        <id>Q9P2W3</id>
    </interactant>
    <interactant intactId="EBI-3937430">
        <id>Q9NRY7</id>
        <label>PLSCR2</label>
    </interactant>
    <organismsDiffer>false</organismsDiffer>
    <experiments>3</experiments>
</comment>
<comment type="interaction">
    <interactant intactId="EBI-11427343">
        <id>Q9P2W3</id>
    </interactant>
    <interactant intactId="EBI-6912267">
        <id>A6NK89</id>
        <label>RASSF10</label>
    </interactant>
    <organismsDiffer>false</organismsDiffer>
    <experiments>3</experiments>
</comment>
<comment type="interaction">
    <interactant intactId="EBI-11427343">
        <id>Q9P2W3</id>
    </interactant>
    <interactant intactId="EBI-1052363">
        <id>Q9NS64</id>
        <label>RPRM</label>
    </interactant>
    <organismsDiffer>false</organismsDiffer>
    <experiments>3</experiments>
</comment>
<comment type="interaction">
    <interactant intactId="EBI-11427343">
        <id>Q9P2W3</id>
    </interactant>
    <interactant intactId="EBI-12821217">
        <id>Q2I0M5</id>
        <label>RSPO4</label>
    </interactant>
    <organismsDiffer>false</organismsDiffer>
    <experiments>3</experiments>
</comment>
<comment type="interaction">
    <interactant intactId="EBI-11427343">
        <id>Q9P2W3</id>
    </interactant>
    <interactant intactId="EBI-9370956">
        <id>Q15562-2</id>
        <label>TEAD2</label>
    </interactant>
    <organismsDiffer>false</organismsDiffer>
    <experiments>3</experiments>
</comment>
<comment type="interaction">
    <interactant intactId="EBI-11427343">
        <id>Q9P2W3</id>
    </interactant>
    <interactant intactId="EBI-11139477">
        <id>Q96N21</id>
        <label>TEPSIN</label>
    </interactant>
    <organismsDiffer>false</organismsDiffer>
    <experiments>3</experiments>
</comment>
<comment type="interaction">
    <interactant intactId="EBI-11427343">
        <id>Q9P2W3</id>
    </interactant>
    <interactant intactId="EBI-2130429">
        <id>Q9BYV2</id>
        <label>TRIM54</label>
    </interactant>
    <organismsDiffer>false</organismsDiffer>
    <experiments>3</experiments>
</comment>
<comment type="interaction">
    <interactant intactId="EBI-11427343">
        <id>Q9P2W3</id>
    </interactant>
    <interactant intactId="EBI-1054584">
        <id>Q9BRT2</id>
        <label>UQCC2</label>
    </interactant>
    <organismsDiffer>false</organismsDiffer>
    <experiments>3</experiments>
</comment>
<comment type="interaction">
    <interactant intactId="EBI-11427343">
        <id>Q9P2W3</id>
    </interactant>
    <interactant intactId="EBI-17974829">
        <id>Q6GMQ7</id>
        <label>VPS16</label>
    </interactant>
    <organismsDiffer>false</organismsDiffer>
    <experiments>3</experiments>
</comment>
<comment type="interaction">
    <interactant intactId="EBI-11427343">
        <id>Q9P2W3</id>
    </interactant>
    <interactant intactId="EBI-712969">
        <id>Q9Y3C0</id>
        <label>WASHC3</label>
    </interactant>
    <organismsDiffer>false</organismsDiffer>
    <experiments>3</experiments>
</comment>
<comment type="subcellular location">
    <subcellularLocation>
        <location evidence="2">Cell membrane</location>
        <topology evidence="2">Lipid-anchor</topology>
        <orientation evidence="2">Cytoplasmic side</orientation>
    </subcellularLocation>
</comment>
<comment type="similarity">
    <text evidence="2">Belongs to the G protein gamma family.</text>
</comment>
<organism>
    <name type="scientific">Homo sapiens</name>
    <name type="common">Human</name>
    <dbReference type="NCBI Taxonomy" id="9606"/>
    <lineage>
        <taxon>Eukaryota</taxon>
        <taxon>Metazoa</taxon>
        <taxon>Chordata</taxon>
        <taxon>Craniata</taxon>
        <taxon>Vertebrata</taxon>
        <taxon>Euteleostomi</taxon>
        <taxon>Mammalia</taxon>
        <taxon>Eutheria</taxon>
        <taxon>Euarchontoglires</taxon>
        <taxon>Primates</taxon>
        <taxon>Haplorrhini</taxon>
        <taxon>Catarrhini</taxon>
        <taxon>Hominidae</taxon>
        <taxon>Homo</taxon>
    </lineage>
</organism>
<sequence>MEEWDVPQMKKEVESLKYQLAFQREMASKTIPELLKWIEDGIPKDPFLNPDLMKNNPWVEKGKCTIL</sequence>
<reference key="1">
    <citation type="journal article" date="1999" name="Nat. Neurosci.">
        <title>Ggamma13 colocalizes with gustducin in taste receptor cells and mediates IP3 responses to bitter denatonium.</title>
        <authorList>
            <person name="Huang L."/>
            <person name="Shanker Y.G."/>
            <person name="Dubauskaite J."/>
            <person name="Zheng J.Z."/>
            <person name="Yan W."/>
            <person name="Rosenzweig S."/>
            <person name="Spielman A.I."/>
            <person name="Max M."/>
            <person name="Margolskee R.F."/>
        </authorList>
    </citation>
    <scope>NUCLEOTIDE SEQUENCE [MRNA]</scope>
</reference>
<reference key="2">
    <citation type="submission" date="1999-07" db="EMBL/GenBank/DDBJ databases">
        <title>E.coli toxicity assay: a novel expression screening method for isolation of mammalian genes with membrane-associated domains or ATP binding/ATPase domains.</title>
        <authorList>
            <person name="Inoue S."/>
            <person name="Sano H."/>
            <person name="Ohta M."/>
        </authorList>
    </citation>
    <scope>NUCLEOTIDE SEQUENCE [MRNA]</scope>
    <source>
        <tissue>Brain</tissue>
    </source>
</reference>
<reference key="3">
    <citation type="submission" date="2002-03" db="EMBL/GenBank/DDBJ databases">
        <title>cDNA clones of human proteins involved in signal transduction sequenced by the Guthrie cDNA resource center (www.cdna.org).</title>
        <authorList>
            <person name="Puhl H.L. III"/>
            <person name="Ikeda S.R."/>
            <person name="Aronstam R.S."/>
        </authorList>
    </citation>
    <scope>NUCLEOTIDE SEQUENCE [LARGE SCALE MRNA]</scope>
</reference>
<reference key="4">
    <citation type="journal article" date="2004" name="Nat. Genet.">
        <title>Complete sequencing and characterization of 21,243 full-length human cDNAs.</title>
        <authorList>
            <person name="Ota T."/>
            <person name="Suzuki Y."/>
            <person name="Nishikawa T."/>
            <person name="Otsuki T."/>
            <person name="Sugiyama T."/>
            <person name="Irie R."/>
            <person name="Wakamatsu A."/>
            <person name="Hayashi K."/>
            <person name="Sato H."/>
            <person name="Nagai K."/>
            <person name="Kimura K."/>
            <person name="Makita H."/>
            <person name="Sekine M."/>
            <person name="Obayashi M."/>
            <person name="Nishi T."/>
            <person name="Shibahara T."/>
            <person name="Tanaka T."/>
            <person name="Ishii S."/>
            <person name="Yamamoto J."/>
            <person name="Saito K."/>
            <person name="Kawai Y."/>
            <person name="Isono Y."/>
            <person name="Nakamura Y."/>
            <person name="Nagahari K."/>
            <person name="Murakami K."/>
            <person name="Yasuda T."/>
            <person name="Iwayanagi T."/>
            <person name="Wagatsuma M."/>
            <person name="Shiratori A."/>
            <person name="Sudo H."/>
            <person name="Hosoiri T."/>
            <person name="Kaku Y."/>
            <person name="Kodaira H."/>
            <person name="Kondo H."/>
            <person name="Sugawara M."/>
            <person name="Takahashi M."/>
            <person name="Kanda K."/>
            <person name="Yokoi T."/>
            <person name="Furuya T."/>
            <person name="Kikkawa E."/>
            <person name="Omura Y."/>
            <person name="Abe K."/>
            <person name="Kamihara K."/>
            <person name="Katsuta N."/>
            <person name="Sato K."/>
            <person name="Tanikawa M."/>
            <person name="Yamazaki M."/>
            <person name="Ninomiya K."/>
            <person name="Ishibashi T."/>
            <person name="Yamashita H."/>
            <person name="Murakawa K."/>
            <person name="Fujimori K."/>
            <person name="Tanai H."/>
            <person name="Kimata M."/>
            <person name="Watanabe M."/>
            <person name="Hiraoka S."/>
            <person name="Chiba Y."/>
            <person name="Ishida S."/>
            <person name="Ono Y."/>
            <person name="Takiguchi S."/>
            <person name="Watanabe S."/>
            <person name="Yosida M."/>
            <person name="Hotuta T."/>
            <person name="Kusano J."/>
            <person name="Kanehori K."/>
            <person name="Takahashi-Fujii A."/>
            <person name="Hara H."/>
            <person name="Tanase T.-O."/>
            <person name="Nomura Y."/>
            <person name="Togiya S."/>
            <person name="Komai F."/>
            <person name="Hara R."/>
            <person name="Takeuchi K."/>
            <person name="Arita M."/>
            <person name="Imose N."/>
            <person name="Musashino K."/>
            <person name="Yuuki H."/>
            <person name="Oshima A."/>
            <person name="Sasaki N."/>
            <person name="Aotsuka S."/>
            <person name="Yoshikawa Y."/>
            <person name="Matsunawa H."/>
            <person name="Ichihara T."/>
            <person name="Shiohata N."/>
            <person name="Sano S."/>
            <person name="Moriya S."/>
            <person name="Momiyama H."/>
            <person name="Satoh N."/>
            <person name="Takami S."/>
            <person name="Terashima Y."/>
            <person name="Suzuki O."/>
            <person name="Nakagawa S."/>
            <person name="Senoh A."/>
            <person name="Mizoguchi H."/>
            <person name="Goto Y."/>
            <person name="Shimizu F."/>
            <person name="Wakebe H."/>
            <person name="Hishigaki H."/>
            <person name="Watanabe T."/>
            <person name="Sugiyama A."/>
            <person name="Takemoto M."/>
            <person name="Kawakami B."/>
            <person name="Yamazaki M."/>
            <person name="Watanabe K."/>
            <person name="Kumagai A."/>
            <person name="Itakura S."/>
            <person name="Fukuzumi Y."/>
            <person name="Fujimori Y."/>
            <person name="Komiyama M."/>
            <person name="Tashiro H."/>
            <person name="Tanigami A."/>
            <person name="Fujiwara T."/>
            <person name="Ono T."/>
            <person name="Yamada K."/>
            <person name="Fujii Y."/>
            <person name="Ozaki K."/>
            <person name="Hirao M."/>
            <person name="Ohmori Y."/>
            <person name="Kawabata A."/>
            <person name="Hikiji T."/>
            <person name="Kobatake N."/>
            <person name="Inagaki H."/>
            <person name="Ikema Y."/>
            <person name="Okamoto S."/>
            <person name="Okitani R."/>
            <person name="Kawakami T."/>
            <person name="Noguchi S."/>
            <person name="Itoh T."/>
            <person name="Shigeta K."/>
            <person name="Senba T."/>
            <person name="Matsumura K."/>
            <person name="Nakajima Y."/>
            <person name="Mizuno T."/>
            <person name="Morinaga M."/>
            <person name="Sasaki M."/>
            <person name="Togashi T."/>
            <person name="Oyama M."/>
            <person name="Hata H."/>
            <person name="Watanabe M."/>
            <person name="Komatsu T."/>
            <person name="Mizushima-Sugano J."/>
            <person name="Satoh T."/>
            <person name="Shirai Y."/>
            <person name="Takahashi Y."/>
            <person name="Nakagawa K."/>
            <person name="Okumura K."/>
            <person name="Nagase T."/>
            <person name="Nomura N."/>
            <person name="Kikuchi H."/>
            <person name="Masuho Y."/>
            <person name="Yamashita R."/>
            <person name="Nakai K."/>
            <person name="Yada T."/>
            <person name="Nakamura Y."/>
            <person name="Ohara O."/>
            <person name="Isogai T."/>
            <person name="Sugano S."/>
        </authorList>
    </citation>
    <scope>NUCLEOTIDE SEQUENCE [LARGE SCALE MRNA]</scope>
    <source>
        <tissue>Cerebellum</tissue>
    </source>
</reference>
<reference key="5">
    <citation type="journal article" date="2001" name="Hum. Mol. Genet.">
        <title>Sequence, structure and pathology of the fully annotated terminal 2 Mb of the short arm of human chromosome 16.</title>
        <authorList>
            <person name="Daniels R.J."/>
            <person name="Peden J.F."/>
            <person name="Lloyd C."/>
            <person name="Horsley S.W."/>
            <person name="Clark K."/>
            <person name="Tufarelli C."/>
            <person name="Kearney L."/>
            <person name="Buckle V.J."/>
            <person name="Doggett N.A."/>
            <person name="Flint J."/>
            <person name="Higgs D.R."/>
        </authorList>
    </citation>
    <scope>NUCLEOTIDE SEQUENCE [LARGE SCALE GENOMIC DNA]</scope>
</reference>
<reference key="6">
    <citation type="journal article" date="2004" name="Nature">
        <title>The sequence and analysis of duplication-rich human chromosome 16.</title>
        <authorList>
            <person name="Martin J."/>
            <person name="Han C."/>
            <person name="Gordon L.A."/>
            <person name="Terry A."/>
            <person name="Prabhakar S."/>
            <person name="She X."/>
            <person name="Xie G."/>
            <person name="Hellsten U."/>
            <person name="Chan Y.M."/>
            <person name="Altherr M."/>
            <person name="Couronne O."/>
            <person name="Aerts A."/>
            <person name="Bajorek E."/>
            <person name="Black S."/>
            <person name="Blumer H."/>
            <person name="Branscomb E."/>
            <person name="Brown N.C."/>
            <person name="Bruno W.J."/>
            <person name="Buckingham J.M."/>
            <person name="Callen D.F."/>
            <person name="Campbell C.S."/>
            <person name="Campbell M.L."/>
            <person name="Campbell E.W."/>
            <person name="Caoile C."/>
            <person name="Challacombe J.F."/>
            <person name="Chasteen L.A."/>
            <person name="Chertkov O."/>
            <person name="Chi H.C."/>
            <person name="Christensen M."/>
            <person name="Clark L.M."/>
            <person name="Cohn J.D."/>
            <person name="Denys M."/>
            <person name="Detter J.C."/>
            <person name="Dickson M."/>
            <person name="Dimitrijevic-Bussod M."/>
            <person name="Escobar J."/>
            <person name="Fawcett J.J."/>
            <person name="Flowers D."/>
            <person name="Fotopulos D."/>
            <person name="Glavina T."/>
            <person name="Gomez M."/>
            <person name="Gonzales E."/>
            <person name="Goodstein D."/>
            <person name="Goodwin L.A."/>
            <person name="Grady D.L."/>
            <person name="Grigoriev I."/>
            <person name="Groza M."/>
            <person name="Hammon N."/>
            <person name="Hawkins T."/>
            <person name="Haydu L."/>
            <person name="Hildebrand C.E."/>
            <person name="Huang W."/>
            <person name="Israni S."/>
            <person name="Jett J."/>
            <person name="Jewett P.B."/>
            <person name="Kadner K."/>
            <person name="Kimball H."/>
            <person name="Kobayashi A."/>
            <person name="Krawczyk M.-C."/>
            <person name="Leyba T."/>
            <person name="Longmire J.L."/>
            <person name="Lopez F."/>
            <person name="Lou Y."/>
            <person name="Lowry S."/>
            <person name="Ludeman T."/>
            <person name="Manohar C.F."/>
            <person name="Mark G.A."/>
            <person name="McMurray K.L."/>
            <person name="Meincke L.J."/>
            <person name="Morgan J."/>
            <person name="Moyzis R.K."/>
            <person name="Mundt M.O."/>
            <person name="Munk A.C."/>
            <person name="Nandkeshwar R.D."/>
            <person name="Pitluck S."/>
            <person name="Pollard M."/>
            <person name="Predki P."/>
            <person name="Parson-Quintana B."/>
            <person name="Ramirez L."/>
            <person name="Rash S."/>
            <person name="Retterer J."/>
            <person name="Ricke D.O."/>
            <person name="Robinson D.L."/>
            <person name="Rodriguez A."/>
            <person name="Salamov A."/>
            <person name="Saunders E.H."/>
            <person name="Scott D."/>
            <person name="Shough T."/>
            <person name="Stallings R.L."/>
            <person name="Stalvey M."/>
            <person name="Sutherland R.D."/>
            <person name="Tapia R."/>
            <person name="Tesmer J.G."/>
            <person name="Thayer N."/>
            <person name="Thompson L.S."/>
            <person name="Tice H."/>
            <person name="Torney D.C."/>
            <person name="Tran-Gyamfi M."/>
            <person name="Tsai M."/>
            <person name="Ulanovsky L.E."/>
            <person name="Ustaszewska A."/>
            <person name="Vo N."/>
            <person name="White P.S."/>
            <person name="Williams A.L."/>
            <person name="Wills P.L."/>
            <person name="Wu J.-R."/>
            <person name="Wu K."/>
            <person name="Yang J."/>
            <person name="DeJong P."/>
            <person name="Bruce D."/>
            <person name="Doggett N.A."/>
            <person name="Deaven L."/>
            <person name="Schmutz J."/>
            <person name="Grimwood J."/>
            <person name="Richardson P."/>
            <person name="Rokhsar D.S."/>
            <person name="Eichler E.E."/>
            <person name="Gilna P."/>
            <person name="Lucas S.M."/>
            <person name="Myers R.M."/>
            <person name="Rubin E.M."/>
            <person name="Pennacchio L.A."/>
        </authorList>
    </citation>
    <scope>NUCLEOTIDE SEQUENCE [LARGE SCALE GENOMIC DNA]</scope>
</reference>
<reference key="7">
    <citation type="journal article" date="2004" name="Genome Res.">
        <title>The status, quality, and expansion of the NIH full-length cDNA project: the Mammalian Gene Collection (MGC).</title>
        <authorList>
            <consortium name="The MGC Project Team"/>
        </authorList>
    </citation>
    <scope>NUCLEOTIDE SEQUENCE [LARGE SCALE MRNA]</scope>
    <source>
        <tissue>Brain</tissue>
    </source>
</reference>
<accession>Q9P2W3</accession>
<accession>B2R5C8</accession>
<accession>Q52LX0</accession>
<accession>Q9UJJ3</accession>
<feature type="chain" id="PRO_0000012671" description="Guanine nucleotide-binding protein G(I)/G(S)/G(O) subunit gamma-13">
    <location>
        <begin position="1"/>
        <end position="64"/>
    </location>
</feature>
<feature type="propeptide" id="PRO_0000012672" description="Removed in mature form" evidence="1">
    <location>
        <begin position="65"/>
        <end position="67"/>
    </location>
</feature>
<feature type="modified residue" description="Cysteine methyl ester" evidence="1">
    <location>
        <position position="64"/>
    </location>
</feature>
<feature type="lipid moiety-binding region" description="S-farnesyl cysteine" evidence="1">
    <location>
        <position position="64"/>
    </location>
</feature>
<evidence type="ECO:0000250" key="1"/>
<evidence type="ECO:0000305" key="2"/>
<gene>
    <name type="primary">GNG13</name>
</gene>
<dbReference type="EMBL" id="AY029486">
    <property type="protein sequence ID" value="AAK40269.1"/>
    <property type="molecule type" value="mRNA"/>
</dbReference>
<dbReference type="EMBL" id="AB030207">
    <property type="protein sequence ID" value="BAA92768.1"/>
    <property type="molecule type" value="mRNA"/>
</dbReference>
<dbReference type="EMBL" id="AF493880">
    <property type="protein sequence ID" value="AAM12594.1"/>
    <property type="molecule type" value="mRNA"/>
</dbReference>
<dbReference type="EMBL" id="AK312139">
    <property type="protein sequence ID" value="BAG35075.1"/>
    <property type="molecule type" value="mRNA"/>
</dbReference>
<dbReference type="EMBL" id="AE006465">
    <property type="protein sequence ID" value="AAK61257.1"/>
    <property type="molecule type" value="Genomic_DNA"/>
</dbReference>
<dbReference type="EMBL" id="AL031033">
    <property type="status" value="NOT_ANNOTATED_CDS"/>
    <property type="molecule type" value="Genomic_DNA"/>
</dbReference>
<dbReference type="EMBL" id="BC093760">
    <property type="protein sequence ID" value="AAH93760.1"/>
    <property type="molecule type" value="mRNA"/>
</dbReference>
<dbReference type="EMBL" id="BC095525">
    <property type="protein sequence ID" value="AAH95525.1"/>
    <property type="molecule type" value="mRNA"/>
</dbReference>
<dbReference type="CCDS" id="CCDS10427.1"/>
<dbReference type="RefSeq" id="NP_057625.1">
    <property type="nucleotide sequence ID" value="NM_016541.3"/>
</dbReference>
<dbReference type="SMR" id="Q9P2W3"/>
<dbReference type="BioGRID" id="119721">
    <property type="interactions" value="35"/>
</dbReference>
<dbReference type="CORUM" id="Q9P2W3"/>
<dbReference type="FunCoup" id="Q9P2W3">
    <property type="interactions" value="1714"/>
</dbReference>
<dbReference type="IntAct" id="Q9P2W3">
    <property type="interactions" value="29"/>
</dbReference>
<dbReference type="STRING" id="9606.ENSP00000248150"/>
<dbReference type="iPTMnet" id="Q9P2W3"/>
<dbReference type="PhosphoSitePlus" id="Q9P2W3"/>
<dbReference type="BioMuta" id="GNG13"/>
<dbReference type="DMDM" id="20138402"/>
<dbReference type="MassIVE" id="Q9P2W3"/>
<dbReference type="PaxDb" id="9606-ENSP00000248150"/>
<dbReference type="PeptideAtlas" id="Q9P2W3"/>
<dbReference type="ProteomicsDB" id="83903"/>
<dbReference type="Antibodypedia" id="52208">
    <property type="antibodies" value="55 antibodies from 18 providers"/>
</dbReference>
<dbReference type="DNASU" id="51764"/>
<dbReference type="Ensembl" id="ENST00000248150.5">
    <property type="protein sequence ID" value="ENSP00000248150.4"/>
    <property type="gene ID" value="ENSG00000127588.5"/>
</dbReference>
<dbReference type="GeneID" id="51764"/>
<dbReference type="KEGG" id="hsa:51764"/>
<dbReference type="MANE-Select" id="ENST00000248150.5">
    <property type="protein sequence ID" value="ENSP00000248150.4"/>
    <property type="RefSeq nucleotide sequence ID" value="NM_016541.3"/>
    <property type="RefSeq protein sequence ID" value="NP_057625.1"/>
</dbReference>
<dbReference type="UCSC" id="uc002ckh.4">
    <property type="organism name" value="human"/>
</dbReference>
<dbReference type="AGR" id="HGNC:14131"/>
<dbReference type="CTD" id="51764"/>
<dbReference type="DisGeNET" id="51764"/>
<dbReference type="GeneCards" id="GNG13"/>
<dbReference type="HGNC" id="HGNC:14131">
    <property type="gene designation" value="GNG13"/>
</dbReference>
<dbReference type="HPA" id="ENSG00000127588">
    <property type="expression patterns" value="Group enriched (brain, retina)"/>
</dbReference>
<dbReference type="MIM" id="607298">
    <property type="type" value="gene"/>
</dbReference>
<dbReference type="neXtProt" id="NX_Q9P2W3"/>
<dbReference type="OpenTargets" id="ENSG00000127588"/>
<dbReference type="PharmGKB" id="PA28783"/>
<dbReference type="VEuPathDB" id="HostDB:ENSG00000127588"/>
<dbReference type="eggNOG" id="KOG4119">
    <property type="taxonomic scope" value="Eukaryota"/>
</dbReference>
<dbReference type="GeneTree" id="ENSGT00530000064157"/>
<dbReference type="HOGENOM" id="CLU_168377_1_1_1"/>
<dbReference type="InParanoid" id="Q9P2W3"/>
<dbReference type="OMA" id="DEWDAPQ"/>
<dbReference type="OrthoDB" id="9922095at2759"/>
<dbReference type="PAN-GO" id="Q9P2W3">
    <property type="GO annotations" value="3 GO annotations based on evolutionary models"/>
</dbReference>
<dbReference type="PhylomeDB" id="Q9P2W3"/>
<dbReference type="TreeFam" id="TF319909"/>
<dbReference type="PathwayCommons" id="Q9P2W3"/>
<dbReference type="Reactome" id="R-HSA-1296041">
    <property type="pathway name" value="Activation of G protein gated Potassium channels"/>
</dbReference>
<dbReference type="Reactome" id="R-HSA-163359">
    <property type="pathway name" value="Glucagon signaling in metabolic regulation"/>
</dbReference>
<dbReference type="Reactome" id="R-HSA-202040">
    <property type="pathway name" value="G-protein activation"/>
</dbReference>
<dbReference type="Reactome" id="R-HSA-381676">
    <property type="pathway name" value="Glucagon-like Peptide-1 (GLP1) regulates insulin secretion"/>
</dbReference>
<dbReference type="Reactome" id="R-HSA-381753">
    <property type="pathway name" value="Olfactory Signaling Pathway"/>
</dbReference>
<dbReference type="Reactome" id="R-HSA-381771">
    <property type="pathway name" value="Synthesis, secretion, and inactivation of Glucagon-like Peptide-1 (GLP-1)"/>
</dbReference>
<dbReference type="Reactome" id="R-HSA-392170">
    <property type="pathway name" value="ADP signalling through P2Y purinoceptor 12"/>
</dbReference>
<dbReference type="Reactome" id="R-HSA-392451">
    <property type="pathway name" value="G beta:gamma signalling through PI3Kgamma"/>
</dbReference>
<dbReference type="Reactome" id="R-HSA-392851">
    <property type="pathway name" value="Prostacyclin signalling through prostacyclin receptor"/>
</dbReference>
<dbReference type="Reactome" id="R-HSA-400042">
    <property type="pathway name" value="Adrenaline,noradrenaline inhibits insulin secretion"/>
</dbReference>
<dbReference type="Reactome" id="R-HSA-4086398">
    <property type="pathway name" value="Ca2+ pathway"/>
</dbReference>
<dbReference type="Reactome" id="R-HSA-416476">
    <property type="pathway name" value="G alpha (q) signalling events"/>
</dbReference>
<dbReference type="Reactome" id="R-HSA-416482">
    <property type="pathway name" value="G alpha (12/13) signalling events"/>
</dbReference>
<dbReference type="Reactome" id="R-HSA-418217">
    <property type="pathway name" value="G beta:gamma signalling through PLC beta"/>
</dbReference>
<dbReference type="Reactome" id="R-HSA-418555">
    <property type="pathway name" value="G alpha (s) signalling events"/>
</dbReference>
<dbReference type="Reactome" id="R-HSA-418592">
    <property type="pathway name" value="ADP signalling through P2Y purinoceptor 1"/>
</dbReference>
<dbReference type="Reactome" id="R-HSA-418594">
    <property type="pathway name" value="G alpha (i) signalling events"/>
</dbReference>
<dbReference type="Reactome" id="R-HSA-418597">
    <property type="pathway name" value="G alpha (z) signalling events"/>
</dbReference>
<dbReference type="Reactome" id="R-HSA-420092">
    <property type="pathway name" value="Glucagon-type ligand receptors"/>
</dbReference>
<dbReference type="Reactome" id="R-HSA-428930">
    <property type="pathway name" value="Thromboxane signalling through TP receptor"/>
</dbReference>
<dbReference type="Reactome" id="R-HSA-432040">
    <property type="pathway name" value="Vasopressin regulates renal water homeostasis via Aquaporins"/>
</dbReference>
<dbReference type="Reactome" id="R-HSA-456926">
    <property type="pathway name" value="Thrombin signalling through proteinase activated receptors (PARs)"/>
</dbReference>
<dbReference type="Reactome" id="R-HSA-500657">
    <property type="pathway name" value="Presynaptic function of Kainate receptors"/>
</dbReference>
<dbReference type="Reactome" id="R-HSA-6814122">
    <property type="pathway name" value="Cooperation of PDCL (PhLP1) and TRiC/CCT in G-protein beta folding"/>
</dbReference>
<dbReference type="Reactome" id="R-HSA-8964315">
    <property type="pathway name" value="G beta:gamma signalling through BTK"/>
</dbReference>
<dbReference type="Reactome" id="R-HSA-8964616">
    <property type="pathway name" value="G beta:gamma signalling through CDC42"/>
</dbReference>
<dbReference type="Reactome" id="R-HSA-9009391">
    <property type="pathway name" value="Extra-nuclear estrogen signaling"/>
</dbReference>
<dbReference type="Reactome" id="R-HSA-9634597">
    <property type="pathway name" value="GPER1 signaling"/>
</dbReference>
<dbReference type="Reactome" id="R-HSA-9660821">
    <property type="pathway name" value="ADORA2B mediated anti-inflammatory cytokines production"/>
</dbReference>
<dbReference type="Reactome" id="R-HSA-9717207">
    <property type="pathway name" value="Sensory perception of sweet, bitter, and umami (glutamate) taste"/>
</dbReference>
<dbReference type="Reactome" id="R-HSA-9856530">
    <property type="pathway name" value="High laminar flow shear stress activates signaling by PIEZO1 and PECAM1:CDH5:KDR in endothelial cells"/>
</dbReference>
<dbReference type="Reactome" id="R-HSA-997272">
    <property type="pathway name" value="Inhibition of voltage gated Ca2+ channels via Gbeta/gamma subunits"/>
</dbReference>
<dbReference type="SignaLink" id="Q9P2W3"/>
<dbReference type="BioGRID-ORCS" id="51764">
    <property type="hits" value="29 hits in 1136 CRISPR screens"/>
</dbReference>
<dbReference type="GeneWiki" id="GNG13"/>
<dbReference type="GenomeRNAi" id="51764"/>
<dbReference type="Pharos" id="Q9P2W3">
    <property type="development level" value="Tbio"/>
</dbReference>
<dbReference type="PRO" id="PR:Q9P2W3"/>
<dbReference type="Proteomes" id="UP000005640">
    <property type="component" value="Chromosome 16"/>
</dbReference>
<dbReference type="RNAct" id="Q9P2W3">
    <property type="molecule type" value="protein"/>
</dbReference>
<dbReference type="Bgee" id="ENSG00000127588">
    <property type="expression patterns" value="Expressed in right hemisphere of cerebellum and 69 other cell types or tissues"/>
</dbReference>
<dbReference type="GO" id="GO:0030425">
    <property type="term" value="C:dendrite"/>
    <property type="evidence" value="ECO:0007669"/>
    <property type="project" value="Ensembl"/>
</dbReference>
<dbReference type="GO" id="GO:0005834">
    <property type="term" value="C:heterotrimeric G-protein complex"/>
    <property type="evidence" value="ECO:0000318"/>
    <property type="project" value="GO_Central"/>
</dbReference>
<dbReference type="GO" id="GO:0005886">
    <property type="term" value="C:plasma membrane"/>
    <property type="evidence" value="ECO:0000304"/>
    <property type="project" value="Reactome"/>
</dbReference>
<dbReference type="GO" id="GO:0045202">
    <property type="term" value="C:synapse"/>
    <property type="evidence" value="ECO:0007669"/>
    <property type="project" value="Ensembl"/>
</dbReference>
<dbReference type="GO" id="GO:0031681">
    <property type="term" value="F:G-protein beta-subunit binding"/>
    <property type="evidence" value="ECO:0000353"/>
    <property type="project" value="UniProtKB"/>
</dbReference>
<dbReference type="GO" id="GO:0007186">
    <property type="term" value="P:G protein-coupled receptor signaling pathway"/>
    <property type="evidence" value="ECO:0000318"/>
    <property type="project" value="GO_Central"/>
</dbReference>
<dbReference type="GO" id="GO:0007200">
    <property type="term" value="P:phospholipase C-activating G protein-coupled receptor signaling pathway"/>
    <property type="evidence" value="ECO:0007669"/>
    <property type="project" value="Ensembl"/>
</dbReference>
<dbReference type="GO" id="GO:0050909">
    <property type="term" value="P:sensory perception of taste"/>
    <property type="evidence" value="ECO:0007669"/>
    <property type="project" value="Ensembl"/>
</dbReference>
<dbReference type="CDD" id="cd00068">
    <property type="entry name" value="GGL"/>
    <property type="match status" value="1"/>
</dbReference>
<dbReference type="FunFam" id="4.10.260.10:FF:000004">
    <property type="entry name" value="guanine nucleotide-binding protein G(I)/G(S)/G(O) subunit gamma-13"/>
    <property type="match status" value="1"/>
</dbReference>
<dbReference type="Gene3D" id="4.10.260.10">
    <property type="entry name" value="Transducin (heterotrimeric G protein), gamma chain"/>
    <property type="match status" value="1"/>
</dbReference>
<dbReference type="InterPro" id="IPR015898">
    <property type="entry name" value="G-protein_gamma-like_dom"/>
</dbReference>
<dbReference type="InterPro" id="IPR036284">
    <property type="entry name" value="GGL_sf"/>
</dbReference>
<dbReference type="InterPro" id="IPR039227">
    <property type="entry name" value="GNG13"/>
</dbReference>
<dbReference type="InterPro" id="IPR001770">
    <property type="entry name" value="Gprotein-gamma"/>
</dbReference>
<dbReference type="PANTHER" id="PTHR15936">
    <property type="entry name" value="GUANINE NUCLEOTIDE-BINDING PROTEIN G I /G S /G O GAMMA-13 SUBUNIT"/>
    <property type="match status" value="1"/>
</dbReference>
<dbReference type="PANTHER" id="PTHR15936:SF2">
    <property type="entry name" value="GUANINE NUCLEOTIDE-BINDING PROTEIN G(I)_G(S)_G(O) SUBUNIT GAMMA-13"/>
    <property type="match status" value="1"/>
</dbReference>
<dbReference type="Pfam" id="PF00631">
    <property type="entry name" value="G-gamma"/>
    <property type="match status" value="1"/>
</dbReference>
<dbReference type="PRINTS" id="PR00321">
    <property type="entry name" value="GPROTEING"/>
</dbReference>
<dbReference type="SMART" id="SM01224">
    <property type="entry name" value="G_gamma"/>
    <property type="match status" value="1"/>
</dbReference>
<dbReference type="SMART" id="SM00224">
    <property type="entry name" value="GGL"/>
    <property type="match status" value="1"/>
</dbReference>
<dbReference type="SUPFAM" id="SSF48670">
    <property type="entry name" value="Transducin (heterotrimeric G protein), gamma chain"/>
    <property type="match status" value="1"/>
</dbReference>
<dbReference type="PROSITE" id="PS50058">
    <property type="entry name" value="G_PROTEIN_GAMMA"/>
    <property type="match status" value="1"/>
</dbReference>
<proteinExistence type="evidence at protein level"/>
<keyword id="KW-1003">Cell membrane</keyword>
<keyword id="KW-0449">Lipoprotein</keyword>
<keyword id="KW-0472">Membrane</keyword>
<keyword id="KW-0488">Methylation</keyword>
<keyword id="KW-0636">Prenylation</keyword>
<keyword id="KW-1267">Proteomics identification</keyword>
<keyword id="KW-1185">Reference proteome</keyword>
<keyword id="KW-0807">Transducer</keyword>
<protein>
    <recommendedName>
        <fullName>Guanine nucleotide-binding protein G(I)/G(S)/G(O) subunit gamma-13</fullName>
    </recommendedName>
</protein>
<name>GBG13_HUMAN</name>